<accession>A5CQP6</accession>
<reference key="1">
    <citation type="journal article" date="2008" name="J. Bacteriol.">
        <title>The genome sequence of the tomato-pathogenic actinomycete Clavibacter michiganensis subsp. michiganensis NCPPB382 reveals a large island involved in pathogenicity.</title>
        <authorList>
            <person name="Gartemann K.-H."/>
            <person name="Abt B."/>
            <person name="Bekel T."/>
            <person name="Burger A."/>
            <person name="Engemann J."/>
            <person name="Fluegel M."/>
            <person name="Gaigalat L."/>
            <person name="Goesmann A."/>
            <person name="Graefen I."/>
            <person name="Kalinowski J."/>
            <person name="Kaup O."/>
            <person name="Kirchner O."/>
            <person name="Krause L."/>
            <person name="Linke B."/>
            <person name="McHardy A."/>
            <person name="Meyer F."/>
            <person name="Pohle S."/>
            <person name="Rueckert C."/>
            <person name="Schneiker S."/>
            <person name="Zellermann E.-M."/>
            <person name="Puehler A."/>
            <person name="Eichenlaub R."/>
            <person name="Kaiser O."/>
            <person name="Bartels D."/>
        </authorList>
    </citation>
    <scope>NUCLEOTIDE SEQUENCE [LARGE SCALE GENOMIC DNA]</scope>
    <source>
        <strain>NCPPB 382</strain>
    </source>
</reference>
<sequence length="163" mass="17472">MQRIAVVPGSFDPVTLGHLDVIRRAARLYDELVVLVVHNPGKTPMLPLGERVALIERVIRDAGLPDTVRVDSWGAGLLVDYCRQVGATVLVKGVRSQLDVTYETPMALVNRDLADVETVLLLPDPAHAHVSSSLVRQVEALGGDVTPYVPAAVADALAVRRAG</sequence>
<dbReference type="EC" id="2.7.7.3" evidence="1"/>
<dbReference type="EMBL" id="AM711867">
    <property type="protein sequence ID" value="CAN01400.1"/>
    <property type="molecule type" value="Genomic_DNA"/>
</dbReference>
<dbReference type="RefSeq" id="WP_012038041.1">
    <property type="nucleotide sequence ID" value="NC_009480.1"/>
</dbReference>
<dbReference type="SMR" id="A5CQP6"/>
<dbReference type="GeneID" id="92947326"/>
<dbReference type="KEGG" id="cmi:CMM_1355"/>
<dbReference type="eggNOG" id="COG0669">
    <property type="taxonomic scope" value="Bacteria"/>
</dbReference>
<dbReference type="HOGENOM" id="CLU_100149_1_0_11"/>
<dbReference type="OrthoDB" id="9806661at2"/>
<dbReference type="UniPathway" id="UPA00241">
    <property type="reaction ID" value="UER00355"/>
</dbReference>
<dbReference type="Proteomes" id="UP000001564">
    <property type="component" value="Chromosome"/>
</dbReference>
<dbReference type="GO" id="GO:0005737">
    <property type="term" value="C:cytoplasm"/>
    <property type="evidence" value="ECO:0007669"/>
    <property type="project" value="UniProtKB-SubCell"/>
</dbReference>
<dbReference type="GO" id="GO:0005524">
    <property type="term" value="F:ATP binding"/>
    <property type="evidence" value="ECO:0007669"/>
    <property type="project" value="UniProtKB-KW"/>
</dbReference>
<dbReference type="GO" id="GO:0004595">
    <property type="term" value="F:pantetheine-phosphate adenylyltransferase activity"/>
    <property type="evidence" value="ECO:0007669"/>
    <property type="project" value="UniProtKB-UniRule"/>
</dbReference>
<dbReference type="GO" id="GO:0015937">
    <property type="term" value="P:coenzyme A biosynthetic process"/>
    <property type="evidence" value="ECO:0007669"/>
    <property type="project" value="UniProtKB-UniRule"/>
</dbReference>
<dbReference type="CDD" id="cd02163">
    <property type="entry name" value="PPAT"/>
    <property type="match status" value="1"/>
</dbReference>
<dbReference type="Gene3D" id="3.40.50.620">
    <property type="entry name" value="HUPs"/>
    <property type="match status" value="1"/>
</dbReference>
<dbReference type="HAMAP" id="MF_00151">
    <property type="entry name" value="PPAT_bact"/>
    <property type="match status" value="1"/>
</dbReference>
<dbReference type="InterPro" id="IPR004821">
    <property type="entry name" value="Cyt_trans-like"/>
</dbReference>
<dbReference type="InterPro" id="IPR001980">
    <property type="entry name" value="PPAT"/>
</dbReference>
<dbReference type="InterPro" id="IPR014729">
    <property type="entry name" value="Rossmann-like_a/b/a_fold"/>
</dbReference>
<dbReference type="NCBIfam" id="TIGR01510">
    <property type="entry name" value="coaD_prev_kdtB"/>
    <property type="match status" value="1"/>
</dbReference>
<dbReference type="NCBIfam" id="TIGR00125">
    <property type="entry name" value="cyt_tran_rel"/>
    <property type="match status" value="1"/>
</dbReference>
<dbReference type="PANTHER" id="PTHR21342">
    <property type="entry name" value="PHOSPHOPANTETHEINE ADENYLYLTRANSFERASE"/>
    <property type="match status" value="1"/>
</dbReference>
<dbReference type="PANTHER" id="PTHR21342:SF1">
    <property type="entry name" value="PHOSPHOPANTETHEINE ADENYLYLTRANSFERASE"/>
    <property type="match status" value="1"/>
</dbReference>
<dbReference type="Pfam" id="PF01467">
    <property type="entry name" value="CTP_transf_like"/>
    <property type="match status" value="1"/>
</dbReference>
<dbReference type="PRINTS" id="PR01020">
    <property type="entry name" value="LPSBIOSNTHSS"/>
</dbReference>
<dbReference type="SUPFAM" id="SSF52374">
    <property type="entry name" value="Nucleotidylyl transferase"/>
    <property type="match status" value="1"/>
</dbReference>
<keyword id="KW-0067">ATP-binding</keyword>
<keyword id="KW-0173">Coenzyme A biosynthesis</keyword>
<keyword id="KW-0963">Cytoplasm</keyword>
<keyword id="KW-0460">Magnesium</keyword>
<keyword id="KW-0547">Nucleotide-binding</keyword>
<keyword id="KW-0548">Nucleotidyltransferase</keyword>
<keyword id="KW-0808">Transferase</keyword>
<organism>
    <name type="scientific">Clavibacter michiganensis subsp. michiganensis (strain NCPPB 382)</name>
    <dbReference type="NCBI Taxonomy" id="443906"/>
    <lineage>
        <taxon>Bacteria</taxon>
        <taxon>Bacillati</taxon>
        <taxon>Actinomycetota</taxon>
        <taxon>Actinomycetes</taxon>
        <taxon>Micrococcales</taxon>
        <taxon>Microbacteriaceae</taxon>
        <taxon>Clavibacter</taxon>
    </lineage>
</organism>
<proteinExistence type="inferred from homology"/>
<evidence type="ECO:0000255" key="1">
    <source>
        <dbReference type="HAMAP-Rule" id="MF_00151"/>
    </source>
</evidence>
<name>COAD_CLAM3</name>
<comment type="function">
    <text evidence="1">Reversibly transfers an adenylyl group from ATP to 4'-phosphopantetheine, yielding dephospho-CoA (dPCoA) and pyrophosphate.</text>
</comment>
<comment type="catalytic activity">
    <reaction evidence="1">
        <text>(R)-4'-phosphopantetheine + ATP + H(+) = 3'-dephospho-CoA + diphosphate</text>
        <dbReference type="Rhea" id="RHEA:19801"/>
        <dbReference type="ChEBI" id="CHEBI:15378"/>
        <dbReference type="ChEBI" id="CHEBI:30616"/>
        <dbReference type="ChEBI" id="CHEBI:33019"/>
        <dbReference type="ChEBI" id="CHEBI:57328"/>
        <dbReference type="ChEBI" id="CHEBI:61723"/>
        <dbReference type="EC" id="2.7.7.3"/>
    </reaction>
</comment>
<comment type="cofactor">
    <cofactor evidence="1">
        <name>Mg(2+)</name>
        <dbReference type="ChEBI" id="CHEBI:18420"/>
    </cofactor>
</comment>
<comment type="pathway">
    <text evidence="1">Cofactor biosynthesis; coenzyme A biosynthesis; CoA from (R)-pantothenate: step 4/5.</text>
</comment>
<comment type="subunit">
    <text evidence="1">Homohexamer.</text>
</comment>
<comment type="subcellular location">
    <subcellularLocation>
        <location evidence="1">Cytoplasm</location>
    </subcellularLocation>
</comment>
<comment type="similarity">
    <text evidence="1">Belongs to the bacterial CoaD family.</text>
</comment>
<protein>
    <recommendedName>
        <fullName evidence="1">Phosphopantetheine adenylyltransferase</fullName>
        <ecNumber evidence="1">2.7.7.3</ecNumber>
    </recommendedName>
    <alternativeName>
        <fullName evidence="1">Dephospho-CoA pyrophosphorylase</fullName>
    </alternativeName>
    <alternativeName>
        <fullName evidence="1">Pantetheine-phosphate adenylyltransferase</fullName>
        <shortName evidence="1">PPAT</shortName>
    </alternativeName>
</protein>
<gene>
    <name evidence="1" type="primary">coaD</name>
    <name type="ordered locus">CMM_1355</name>
</gene>
<feature type="chain" id="PRO_1000011124" description="Phosphopantetheine adenylyltransferase">
    <location>
        <begin position="1"/>
        <end position="163"/>
    </location>
</feature>
<feature type="binding site" evidence="1">
    <location>
        <begin position="10"/>
        <end position="11"/>
    </location>
    <ligand>
        <name>ATP</name>
        <dbReference type="ChEBI" id="CHEBI:30616"/>
    </ligand>
</feature>
<feature type="binding site" evidence="1">
    <location>
        <position position="10"/>
    </location>
    <ligand>
        <name>substrate</name>
    </ligand>
</feature>
<feature type="binding site" evidence="1">
    <location>
        <position position="18"/>
    </location>
    <ligand>
        <name>ATP</name>
        <dbReference type="ChEBI" id="CHEBI:30616"/>
    </ligand>
</feature>
<feature type="binding site" evidence="1">
    <location>
        <position position="42"/>
    </location>
    <ligand>
        <name>substrate</name>
    </ligand>
</feature>
<feature type="binding site" evidence="1">
    <location>
        <position position="78"/>
    </location>
    <ligand>
        <name>substrate</name>
    </ligand>
</feature>
<feature type="binding site" evidence="1">
    <location>
        <position position="92"/>
    </location>
    <ligand>
        <name>substrate</name>
    </ligand>
</feature>
<feature type="binding site" evidence="1">
    <location>
        <begin position="93"/>
        <end position="95"/>
    </location>
    <ligand>
        <name>ATP</name>
        <dbReference type="ChEBI" id="CHEBI:30616"/>
    </ligand>
</feature>
<feature type="binding site" evidence="1">
    <location>
        <position position="103"/>
    </location>
    <ligand>
        <name>ATP</name>
        <dbReference type="ChEBI" id="CHEBI:30616"/>
    </ligand>
</feature>
<feature type="binding site" evidence="1">
    <location>
        <begin position="127"/>
        <end position="133"/>
    </location>
    <ligand>
        <name>ATP</name>
        <dbReference type="ChEBI" id="CHEBI:30616"/>
    </ligand>
</feature>
<feature type="site" description="Transition state stabilizer" evidence="1">
    <location>
        <position position="18"/>
    </location>
</feature>